<accession>Q975N4</accession>
<accession>F9VMW3</accession>
<evidence type="ECO:0000255" key="1">
    <source>
        <dbReference type="HAMAP-Rule" id="MF_00288"/>
    </source>
</evidence>
<evidence type="ECO:0000305" key="2"/>
<keyword id="KW-0028">Amino-acid biosynthesis</keyword>
<keyword id="KW-0479">Metal-binding</keyword>
<keyword id="KW-0486">Methionine biosynthesis</keyword>
<keyword id="KW-0489">Methyltransferase</keyword>
<keyword id="KW-1185">Reference proteome</keyword>
<keyword id="KW-0808">Transferase</keyword>
<keyword id="KW-0862">Zinc</keyword>
<name>METE_SULTO</name>
<gene>
    <name evidence="1" type="primary">metE</name>
    <name type="ordered locus">STK_03850</name>
</gene>
<comment type="function">
    <text evidence="1">Catalyzes the transfer of a methyl group to L-homocysteine resulting in methionine formation. The physiological methyl donor is unknown.</text>
</comment>
<comment type="cofactor">
    <cofactor evidence="1">
        <name>Zn(2+)</name>
        <dbReference type="ChEBI" id="CHEBI:29105"/>
    </cofactor>
    <text evidence="1">Binds 1 zinc ion per subunit.</text>
</comment>
<comment type="pathway">
    <text evidence="1">Amino-acid biosynthesis; L-methionine biosynthesis via de novo pathway.</text>
</comment>
<comment type="similarity">
    <text evidence="1 2">Belongs to the archaeal MetE family.</text>
</comment>
<proteinExistence type="inferred from homology"/>
<sequence>MDELPILPTTVIGSYPRPKWLREAIRLHKAGKISDEDLQEAFDDAVVTVLHDHEIAGVDVPTDGEMRRDEMVEFFAERLAGFKFYGPVRVWGTNYYRKPSVVSKVEYIKPMLVDEFLFAKSVSYTENLKITITGPYTIAEWSYNEYYKSKKDLAFDLAKVINSEMKKLVEAGAKIIQVDEPAIHTHKNEVEWAIEAVNESIKGINVKVVMHVCYGEYSYLEPYLDKLNVDQINLALKNYNYEPVKLFKKWDREIGVGVIDVHNKRIETPEEVANDLKMLLDYFKPEMIWVNPDCGLKLLPRKIAFQKLLNMVKGTKIVREELKNKGYNSTSLKPLVNR</sequence>
<feature type="chain" id="PRO_0000098693" description="Methionine synthase">
    <location>
        <begin position="1"/>
        <end position="338"/>
    </location>
</feature>
<feature type="binding site" evidence="1">
    <location>
        <position position="211"/>
    </location>
    <ligand>
        <name>Zn(2+)</name>
        <dbReference type="ChEBI" id="CHEBI:29105"/>
        <note>catalytic</note>
    </ligand>
</feature>
<feature type="binding site" evidence="1">
    <location>
        <position position="213"/>
    </location>
    <ligand>
        <name>Zn(2+)</name>
        <dbReference type="ChEBI" id="CHEBI:29105"/>
        <note>catalytic</note>
    </ligand>
</feature>
<feature type="binding site" evidence="1">
    <location>
        <position position="294"/>
    </location>
    <ligand>
        <name>Zn(2+)</name>
        <dbReference type="ChEBI" id="CHEBI:29105"/>
        <note>catalytic</note>
    </ligand>
</feature>
<reference key="1">
    <citation type="journal article" date="2001" name="DNA Res.">
        <title>Complete genome sequence of an aerobic thermoacidophilic Crenarchaeon, Sulfolobus tokodaii strain7.</title>
        <authorList>
            <person name="Kawarabayasi Y."/>
            <person name="Hino Y."/>
            <person name="Horikawa H."/>
            <person name="Jin-no K."/>
            <person name="Takahashi M."/>
            <person name="Sekine M."/>
            <person name="Baba S."/>
            <person name="Ankai A."/>
            <person name="Kosugi H."/>
            <person name="Hosoyama A."/>
            <person name="Fukui S."/>
            <person name="Nagai Y."/>
            <person name="Nishijima K."/>
            <person name="Otsuka R."/>
            <person name="Nakazawa H."/>
            <person name="Takamiya M."/>
            <person name="Kato Y."/>
            <person name="Yoshizawa T."/>
            <person name="Tanaka T."/>
            <person name="Kudoh Y."/>
            <person name="Yamazaki J."/>
            <person name="Kushida N."/>
            <person name="Oguchi A."/>
            <person name="Aoki K."/>
            <person name="Masuda S."/>
            <person name="Yanagii M."/>
            <person name="Nishimura M."/>
            <person name="Yamagishi A."/>
            <person name="Oshima T."/>
            <person name="Kikuchi H."/>
        </authorList>
    </citation>
    <scope>NUCLEOTIDE SEQUENCE [LARGE SCALE GENOMIC DNA]</scope>
    <source>
        <strain>DSM 16993 / JCM 10545 / NBRC 100140 / 7</strain>
    </source>
</reference>
<dbReference type="EC" id="2.1.1.-" evidence="1"/>
<dbReference type="EMBL" id="BA000023">
    <property type="protein sequence ID" value="BAK54260.1"/>
    <property type="molecule type" value="Genomic_DNA"/>
</dbReference>
<dbReference type="RefSeq" id="WP_010978349.1">
    <property type="nucleotide sequence ID" value="NC_003106.2"/>
</dbReference>
<dbReference type="SMR" id="Q975N4"/>
<dbReference type="STRING" id="273063.STK_03850"/>
<dbReference type="GeneID" id="1458310"/>
<dbReference type="KEGG" id="sto:STK_03850"/>
<dbReference type="PATRIC" id="fig|273063.9.peg.446"/>
<dbReference type="eggNOG" id="arCOG01876">
    <property type="taxonomic scope" value="Archaea"/>
</dbReference>
<dbReference type="OrthoDB" id="17656at2157"/>
<dbReference type="UniPathway" id="UPA00051"/>
<dbReference type="Proteomes" id="UP000001015">
    <property type="component" value="Chromosome"/>
</dbReference>
<dbReference type="GO" id="GO:0003871">
    <property type="term" value="F:5-methyltetrahydropteroyltriglutamate-homocysteine S-methyltransferase activity"/>
    <property type="evidence" value="ECO:0007669"/>
    <property type="project" value="InterPro"/>
</dbReference>
<dbReference type="GO" id="GO:0008270">
    <property type="term" value="F:zinc ion binding"/>
    <property type="evidence" value="ECO:0007669"/>
    <property type="project" value="InterPro"/>
</dbReference>
<dbReference type="GO" id="GO:0009086">
    <property type="term" value="P:methionine biosynthetic process"/>
    <property type="evidence" value="ECO:0007669"/>
    <property type="project" value="UniProtKB-UniRule"/>
</dbReference>
<dbReference type="GO" id="GO:0032259">
    <property type="term" value="P:methylation"/>
    <property type="evidence" value="ECO:0007669"/>
    <property type="project" value="UniProtKB-KW"/>
</dbReference>
<dbReference type="CDD" id="cd03311">
    <property type="entry name" value="CIMS_C_terminal_like"/>
    <property type="match status" value="1"/>
</dbReference>
<dbReference type="Gene3D" id="3.20.20.210">
    <property type="match status" value="1"/>
</dbReference>
<dbReference type="HAMAP" id="MF_00288">
    <property type="entry name" value="MetE"/>
    <property type="match status" value="1"/>
</dbReference>
<dbReference type="InterPro" id="IPR002629">
    <property type="entry name" value="Met_Synth_C/arc"/>
</dbReference>
<dbReference type="InterPro" id="IPR022921">
    <property type="entry name" value="MetE_arc"/>
</dbReference>
<dbReference type="InterPro" id="IPR038071">
    <property type="entry name" value="UROD/MetE-like_sf"/>
</dbReference>
<dbReference type="NCBIfam" id="NF003317">
    <property type="entry name" value="PRK04326.1"/>
    <property type="match status" value="1"/>
</dbReference>
<dbReference type="PANTHER" id="PTHR30519">
    <property type="entry name" value="5-METHYLTETRAHYDROPTEROYLTRIGLUTAMATE--HOMOCYSTEINE METHYLTRANSFERASE"/>
    <property type="match status" value="1"/>
</dbReference>
<dbReference type="Pfam" id="PF01717">
    <property type="entry name" value="Meth_synt_2"/>
    <property type="match status" value="1"/>
</dbReference>
<dbReference type="SUPFAM" id="SSF51726">
    <property type="entry name" value="UROD/MetE-like"/>
    <property type="match status" value="1"/>
</dbReference>
<organism>
    <name type="scientific">Sulfurisphaera tokodaii (strain DSM 16993 / JCM 10545 / NBRC 100140 / 7)</name>
    <name type="common">Sulfolobus tokodaii</name>
    <dbReference type="NCBI Taxonomy" id="273063"/>
    <lineage>
        <taxon>Archaea</taxon>
        <taxon>Thermoproteota</taxon>
        <taxon>Thermoprotei</taxon>
        <taxon>Sulfolobales</taxon>
        <taxon>Sulfolobaceae</taxon>
        <taxon>Sulfurisphaera</taxon>
    </lineage>
</organism>
<protein>
    <recommendedName>
        <fullName evidence="1">Methionine synthase</fullName>
        <ecNumber evidence="1">2.1.1.-</ecNumber>
    </recommendedName>
    <alternativeName>
        <fullName evidence="1">Homocysteine methyltransferase</fullName>
    </alternativeName>
</protein>